<accession>Q5LUS2</accession>
<feature type="chain" id="PRO_0000135847" description="Histidinol dehydrogenase homolog">
    <location>
        <begin position="1"/>
        <end position="433"/>
    </location>
</feature>
<feature type="active site" description="Proton acceptor" evidence="1">
    <location>
        <position position="319"/>
    </location>
</feature>
<feature type="active site" description="Proton acceptor" evidence="1">
    <location>
        <position position="320"/>
    </location>
</feature>
<feature type="binding site" evidence="1">
    <location>
        <position position="249"/>
    </location>
    <ligand>
        <name>Zn(2+)</name>
        <dbReference type="ChEBI" id="CHEBI:29105"/>
    </ligand>
</feature>
<feature type="binding site" evidence="1">
    <location>
        <position position="252"/>
    </location>
    <ligand>
        <name>Zn(2+)</name>
        <dbReference type="ChEBI" id="CHEBI:29105"/>
    </ligand>
</feature>
<feature type="binding site" evidence="1">
    <location>
        <position position="353"/>
    </location>
    <ligand>
        <name>Zn(2+)</name>
        <dbReference type="ChEBI" id="CHEBI:29105"/>
    </ligand>
</feature>
<feature type="binding site" evidence="1">
    <location>
        <position position="412"/>
    </location>
    <ligand>
        <name>Zn(2+)</name>
        <dbReference type="ChEBI" id="CHEBI:29105"/>
    </ligand>
</feature>
<organism>
    <name type="scientific">Ruegeria pomeroyi (strain ATCC 700808 / DSM 15171 / DSS-3)</name>
    <name type="common">Silicibacter pomeroyi</name>
    <dbReference type="NCBI Taxonomy" id="246200"/>
    <lineage>
        <taxon>Bacteria</taxon>
        <taxon>Pseudomonadati</taxon>
        <taxon>Pseudomonadota</taxon>
        <taxon>Alphaproteobacteria</taxon>
        <taxon>Rhodobacterales</taxon>
        <taxon>Roseobacteraceae</taxon>
        <taxon>Ruegeria</taxon>
    </lineage>
</organism>
<name>HISXH_RUEPO</name>
<gene>
    <name type="ordered locus">SPO0981</name>
</gene>
<reference key="1">
    <citation type="journal article" date="2004" name="Nature">
        <title>Genome sequence of Silicibacter pomeroyi reveals adaptations to the marine environment.</title>
        <authorList>
            <person name="Moran M.A."/>
            <person name="Buchan A."/>
            <person name="Gonzalez J.M."/>
            <person name="Heidelberg J.F."/>
            <person name="Whitman W.B."/>
            <person name="Kiene R.P."/>
            <person name="Henriksen J.R."/>
            <person name="King G.M."/>
            <person name="Belas R."/>
            <person name="Fuqua C."/>
            <person name="Brinkac L.M."/>
            <person name="Lewis M."/>
            <person name="Johri S."/>
            <person name="Weaver B."/>
            <person name="Pai G."/>
            <person name="Eisen J.A."/>
            <person name="Rahe E."/>
            <person name="Sheldon W.M."/>
            <person name="Ye W."/>
            <person name="Miller T.R."/>
            <person name="Carlton J."/>
            <person name="Rasko D.A."/>
            <person name="Paulsen I.T."/>
            <person name="Ren Q."/>
            <person name="Daugherty S.C."/>
            <person name="DeBoy R.T."/>
            <person name="Dodson R.J."/>
            <person name="Durkin A.S."/>
            <person name="Madupu R."/>
            <person name="Nelson W.C."/>
            <person name="Sullivan S.A."/>
            <person name="Rosovitz M.J."/>
            <person name="Haft D.H."/>
            <person name="Selengut J."/>
            <person name="Ward N."/>
        </authorList>
    </citation>
    <scope>NUCLEOTIDE SEQUENCE [LARGE SCALE GENOMIC DNA]</scope>
    <source>
        <strain>ATCC 700808 / DSM 15171 / DSS-3</strain>
    </source>
</reference>
<reference key="2">
    <citation type="journal article" date="2014" name="Stand. Genomic Sci.">
        <title>An updated genome annotation for the model marine bacterium Ruegeria pomeroyi DSS-3.</title>
        <authorList>
            <person name="Rivers A.R."/>
            <person name="Smith C.B."/>
            <person name="Moran M.A."/>
        </authorList>
    </citation>
    <scope>GENOME REANNOTATION</scope>
    <source>
        <strain>ATCC 700808 / DSM 15171 / DSS-3</strain>
    </source>
</reference>
<evidence type="ECO:0000250" key="1">
    <source>
        <dbReference type="UniProtKB" id="P06988"/>
    </source>
</evidence>
<evidence type="ECO:0000305" key="2"/>
<comment type="cofactor">
    <cofactor evidence="1">
        <name>Zn(2+)</name>
        <dbReference type="ChEBI" id="CHEBI:29105"/>
    </cofactor>
    <text evidence="1">Binds 1 zinc ion per subunit.</text>
</comment>
<comment type="similarity">
    <text evidence="2">Belongs to the histidinol dehydrogenase family.</text>
</comment>
<protein>
    <recommendedName>
        <fullName evidence="2">Histidinol dehydrogenase homolog</fullName>
        <ecNumber evidence="2">1.1.-.-</ecNumber>
    </recommendedName>
</protein>
<sequence length="433" mass="45353">MTITVLKSAPGLPPAPQGDAADVVQVMLARLRAEGEAAARDYAARLDGWSGEIVVSPDQVARASEQVPEDLKTQIRYAHDNIRRFAEAQRASALDFQTELRPGLIAGQKQIPLAAAGAYVPGGRYAHIASALMSIATARAAGVGQITAVSPPQVGRGVHPAILYAMSLAGADRILALGGVQGVAALAFGLFGAPPADILVGPGNQFVAEAKRQLFGPVGIDMFAGPTDSLVIADSTADPLTVAWDLVGQAEHGYNSPVWLVTDSAALAEAVLAHIPGCIADLPEPNRSSAQAAWDALGEVILCTDREEMAATADRYAPEHLHVQAADLDWWRGRLSAYGSLFLGELTTVAFGDKASGPNHVLPTSGAARYTGGLSVHKFLKTVTWQQVAPQALPDLARATATISRAEGMEGHARTADIRLEKLRPTLRQVGTG</sequence>
<keyword id="KW-0479">Metal-binding</keyword>
<keyword id="KW-0560">Oxidoreductase</keyword>
<keyword id="KW-1185">Reference proteome</keyword>
<keyword id="KW-0862">Zinc</keyword>
<proteinExistence type="inferred from homology"/>
<dbReference type="EC" id="1.1.-.-" evidence="2"/>
<dbReference type="EMBL" id="CP000031">
    <property type="protein sequence ID" value="AAV94285.1"/>
    <property type="molecule type" value="Genomic_DNA"/>
</dbReference>
<dbReference type="RefSeq" id="WP_011046729.1">
    <property type="nucleotide sequence ID" value="NC_003911.12"/>
</dbReference>
<dbReference type="SMR" id="Q5LUS2"/>
<dbReference type="STRING" id="246200.SPO0981"/>
<dbReference type="PaxDb" id="246200-SPO0981"/>
<dbReference type="KEGG" id="sil:SPO0981"/>
<dbReference type="eggNOG" id="COG0141">
    <property type="taxonomic scope" value="Bacteria"/>
</dbReference>
<dbReference type="HOGENOM" id="CLU_006732_3_0_5"/>
<dbReference type="OrthoDB" id="9805269at2"/>
<dbReference type="Proteomes" id="UP000001023">
    <property type="component" value="Chromosome"/>
</dbReference>
<dbReference type="GO" id="GO:0005829">
    <property type="term" value="C:cytosol"/>
    <property type="evidence" value="ECO:0007669"/>
    <property type="project" value="TreeGrafter"/>
</dbReference>
<dbReference type="GO" id="GO:0004399">
    <property type="term" value="F:histidinol dehydrogenase activity"/>
    <property type="evidence" value="ECO:0007669"/>
    <property type="project" value="InterPro"/>
</dbReference>
<dbReference type="GO" id="GO:0046872">
    <property type="term" value="F:metal ion binding"/>
    <property type="evidence" value="ECO:0007669"/>
    <property type="project" value="UniProtKB-KW"/>
</dbReference>
<dbReference type="GO" id="GO:0051287">
    <property type="term" value="F:NAD binding"/>
    <property type="evidence" value="ECO:0007669"/>
    <property type="project" value="InterPro"/>
</dbReference>
<dbReference type="GO" id="GO:0000105">
    <property type="term" value="P:L-histidine biosynthetic process"/>
    <property type="evidence" value="ECO:0007669"/>
    <property type="project" value="InterPro"/>
</dbReference>
<dbReference type="CDD" id="cd06572">
    <property type="entry name" value="Histidinol_dh"/>
    <property type="match status" value="1"/>
</dbReference>
<dbReference type="FunFam" id="3.40.50.1980:FF:000001">
    <property type="entry name" value="Histidinol dehydrogenase"/>
    <property type="match status" value="1"/>
</dbReference>
<dbReference type="Gene3D" id="1.20.5.1300">
    <property type="match status" value="1"/>
</dbReference>
<dbReference type="Gene3D" id="3.40.50.1980">
    <property type="entry name" value="Nitrogenase molybdenum iron protein domain"/>
    <property type="match status" value="2"/>
</dbReference>
<dbReference type="InterPro" id="IPR016161">
    <property type="entry name" value="Ald_DH/histidinol_DH"/>
</dbReference>
<dbReference type="InterPro" id="IPR001692">
    <property type="entry name" value="Histidinol_DH_CS"/>
</dbReference>
<dbReference type="InterPro" id="IPR022695">
    <property type="entry name" value="Histidinol_DH_monofunct"/>
</dbReference>
<dbReference type="InterPro" id="IPR012131">
    <property type="entry name" value="Hstdl_DH"/>
</dbReference>
<dbReference type="NCBIfam" id="TIGR00069">
    <property type="entry name" value="hisD"/>
    <property type="match status" value="1"/>
</dbReference>
<dbReference type="PANTHER" id="PTHR21256:SF14">
    <property type="entry name" value="HISTIDINOL DEHYDROGENASE"/>
    <property type="match status" value="1"/>
</dbReference>
<dbReference type="PANTHER" id="PTHR21256">
    <property type="entry name" value="HISTIDINOL DEHYDROGENASE HDH"/>
    <property type="match status" value="1"/>
</dbReference>
<dbReference type="Pfam" id="PF00815">
    <property type="entry name" value="Histidinol_dh"/>
    <property type="match status" value="1"/>
</dbReference>
<dbReference type="PIRSF" id="PIRSF000099">
    <property type="entry name" value="Histidinol_dh"/>
    <property type="match status" value="1"/>
</dbReference>
<dbReference type="PRINTS" id="PR00083">
    <property type="entry name" value="HOLDHDRGNASE"/>
</dbReference>
<dbReference type="SUPFAM" id="SSF53720">
    <property type="entry name" value="ALDH-like"/>
    <property type="match status" value="1"/>
</dbReference>
<dbReference type="PROSITE" id="PS00611">
    <property type="entry name" value="HISOL_DEHYDROGENASE"/>
    <property type="match status" value="1"/>
</dbReference>